<evidence type="ECO:0000255" key="1"/>
<evidence type="ECO:0000269" key="2">
    <source>
    </source>
</evidence>
<evidence type="ECO:0000303" key="3">
    <source>
    </source>
</evidence>
<evidence type="ECO:0000305" key="4"/>
<proteinExistence type="evidence at protein level"/>
<dbReference type="EC" id="3.4.23.-"/>
<dbReference type="iPTMnet" id="P85320"/>
<dbReference type="GO" id="GO:0005576">
    <property type="term" value="C:extracellular region"/>
    <property type="evidence" value="ECO:0007669"/>
    <property type="project" value="UniProtKB-SubCell"/>
</dbReference>
<dbReference type="GO" id="GO:0004190">
    <property type="term" value="F:aspartic-type endopeptidase activity"/>
    <property type="evidence" value="ECO:0007669"/>
    <property type="project" value="UniProtKB-KW"/>
</dbReference>
<dbReference type="GO" id="GO:0006508">
    <property type="term" value="P:proteolysis"/>
    <property type="evidence" value="ECO:0007669"/>
    <property type="project" value="UniProtKB-KW"/>
</dbReference>
<keyword id="KW-0064">Aspartyl protease</keyword>
<keyword id="KW-0903">Direct protein sequencing</keyword>
<keyword id="KW-0325">Glycoprotein</keyword>
<keyword id="KW-0378">Hydrolase</keyword>
<keyword id="KW-0645">Protease</keyword>
<keyword id="KW-0964">Secreted</keyword>
<reference key="1">
    <citation type="journal article" date="2009" name="Anim. Reprod. Sci.">
        <title>Identification of multiple pregnancy-associated glycoproteins (PAGs) purified from the European bison (Eb; Bison bonasus L.) placentas.</title>
        <authorList>
            <person name="Kiewisz J."/>
            <person name="Melo de Sousa N."/>
            <person name="Beckers J.-F.M.P."/>
            <person name="Panasiewicz G."/>
            <person name="Gizejewski Z."/>
            <person name="Szafranska B."/>
        </authorList>
    </citation>
    <scope>PROTEIN SEQUENCE</scope>
    <scope>TISSUE SPECIFICITY</scope>
    <scope>DEVELOPMENTAL STAGE</scope>
    <scope>GLYCOSYLATION AT ASN-4</scope>
    <source>
        <tissue>Placenta</tissue>
    </source>
</reference>
<sequence>RGSNLTHPL</sequence>
<name>PA55B_BISBO</name>
<feature type="chain" id="PRO_0000314068" description="Pregnancy-associated glycoprotein 55B">
    <location>
        <begin position="1"/>
        <end position="9" status="greater than"/>
    </location>
</feature>
<feature type="glycosylation site" description="N-linked (GlcNAc...) asparagine" evidence="2">
    <location>
        <position position="4"/>
    </location>
</feature>
<feature type="non-terminal residue" evidence="3">
    <location>
        <position position="9"/>
    </location>
</feature>
<protein>
    <recommendedName>
        <fullName>Pregnancy-associated glycoprotein 55B</fullName>
        <ecNumber>3.4.23.-</ecNumber>
    </recommendedName>
    <alternativeName>
        <fullName>EbPAG-B 55 kDa</fullName>
    </alternativeName>
</protein>
<accession>P85320</accession>
<comment type="subcellular location">
    <subcellularLocation>
        <location evidence="4">Secreted</location>
        <location evidence="4">Extracellular space</location>
    </subcellularLocation>
</comment>
<comment type="tissue specificity">
    <text evidence="2">Chorionic epithelium (trophectoderm) and placental cotyledons.</text>
</comment>
<comment type="developmental stage">
    <text evidence="2">Expressed at 45 dpc.</text>
</comment>
<comment type="miscellaneous">
    <text evidence="2">On the 2D-gel the determined pI of this protein is: 5.4, its MW is: 55 kDa.</text>
</comment>
<comment type="similarity">
    <text evidence="1">Belongs to the peptidase A1 family.</text>
</comment>
<organism>
    <name type="scientific">Bison bonasus</name>
    <name type="common">European bison</name>
    <dbReference type="NCBI Taxonomy" id="9902"/>
    <lineage>
        <taxon>Eukaryota</taxon>
        <taxon>Metazoa</taxon>
        <taxon>Chordata</taxon>
        <taxon>Craniata</taxon>
        <taxon>Vertebrata</taxon>
        <taxon>Euteleostomi</taxon>
        <taxon>Mammalia</taxon>
        <taxon>Eutheria</taxon>
        <taxon>Laurasiatheria</taxon>
        <taxon>Artiodactyla</taxon>
        <taxon>Ruminantia</taxon>
        <taxon>Pecora</taxon>
        <taxon>Bovidae</taxon>
        <taxon>Bovinae</taxon>
        <taxon>Bison</taxon>
    </lineage>
</organism>